<name>DDL_STRZT</name>
<organism>
    <name type="scientific">Streptococcus pneumoniae (strain Taiwan19F-14)</name>
    <dbReference type="NCBI Taxonomy" id="487213"/>
    <lineage>
        <taxon>Bacteria</taxon>
        <taxon>Bacillati</taxon>
        <taxon>Bacillota</taxon>
        <taxon>Bacilli</taxon>
        <taxon>Lactobacillales</taxon>
        <taxon>Streptococcaceae</taxon>
        <taxon>Streptococcus</taxon>
    </lineage>
</organism>
<sequence>MKQTIILLYGGRSAEREVSVLSAESVMRAVNYDRFTVKTFFISQSGDFIKTQEFSHAPGQEDRLMTNETIDWDKKVAPSAIYEEGAVVFPVLHGPMGEDGSVQGFLEVLKMPYVGCNILSSSLAMDKITTKRVLESAGIAQVPYVAIVEGDDVTAKIAEVEEKLAYPVFTKPSNMGSSVGISKSENQEELRPALELAFRYDSRVLVEQGVNAREIEVGLLGNYDVKSTLPGEVVKDVAFYDYDAKYIDNKITMDIPAKISDDVVAVMRQNAETAFRAIGGLGLSRCDFFYTDKGEIFLNELNTMPGFTQWSMYPLLWDNMGISYPELIERLVDLAKESFDKREAHLI</sequence>
<dbReference type="EC" id="6.3.2.4" evidence="2"/>
<dbReference type="EMBL" id="CP000921">
    <property type="protein sequence ID" value="ACO23289.1"/>
    <property type="molecule type" value="Genomic_DNA"/>
</dbReference>
<dbReference type="RefSeq" id="WP_000814645.1">
    <property type="nucleotide sequence ID" value="NC_012469.1"/>
</dbReference>
<dbReference type="SMR" id="C1CST6"/>
<dbReference type="KEGG" id="snt:SPT_1610"/>
<dbReference type="HOGENOM" id="CLU_039268_0_0_9"/>
<dbReference type="UniPathway" id="UPA00219"/>
<dbReference type="GO" id="GO:0005829">
    <property type="term" value="C:cytosol"/>
    <property type="evidence" value="ECO:0007669"/>
    <property type="project" value="TreeGrafter"/>
</dbReference>
<dbReference type="GO" id="GO:0005524">
    <property type="term" value="F:ATP binding"/>
    <property type="evidence" value="ECO:0007669"/>
    <property type="project" value="UniProtKB-KW"/>
</dbReference>
<dbReference type="GO" id="GO:0008716">
    <property type="term" value="F:D-alanine-D-alanine ligase activity"/>
    <property type="evidence" value="ECO:0007669"/>
    <property type="project" value="UniProtKB-UniRule"/>
</dbReference>
<dbReference type="GO" id="GO:0046872">
    <property type="term" value="F:metal ion binding"/>
    <property type="evidence" value="ECO:0007669"/>
    <property type="project" value="UniProtKB-KW"/>
</dbReference>
<dbReference type="GO" id="GO:0071555">
    <property type="term" value="P:cell wall organization"/>
    <property type="evidence" value="ECO:0007669"/>
    <property type="project" value="UniProtKB-KW"/>
</dbReference>
<dbReference type="GO" id="GO:0009252">
    <property type="term" value="P:peptidoglycan biosynthetic process"/>
    <property type="evidence" value="ECO:0007669"/>
    <property type="project" value="UniProtKB-UniRule"/>
</dbReference>
<dbReference type="GO" id="GO:0008360">
    <property type="term" value="P:regulation of cell shape"/>
    <property type="evidence" value="ECO:0007669"/>
    <property type="project" value="UniProtKB-KW"/>
</dbReference>
<dbReference type="FunFam" id="3.30.1490.20:FF:000007">
    <property type="entry name" value="D-alanine--D-alanine ligase"/>
    <property type="match status" value="1"/>
</dbReference>
<dbReference type="FunFam" id="3.30.470.20:FF:000008">
    <property type="entry name" value="D-alanine--D-alanine ligase"/>
    <property type="match status" value="1"/>
</dbReference>
<dbReference type="FunFam" id="3.40.50.20:FF:000029">
    <property type="entry name" value="D-alanine--D-alanine ligase"/>
    <property type="match status" value="1"/>
</dbReference>
<dbReference type="Gene3D" id="3.40.50.20">
    <property type="match status" value="1"/>
</dbReference>
<dbReference type="Gene3D" id="3.30.1490.20">
    <property type="entry name" value="ATP-grasp fold, A domain"/>
    <property type="match status" value="1"/>
</dbReference>
<dbReference type="Gene3D" id="3.30.470.20">
    <property type="entry name" value="ATP-grasp fold, B domain"/>
    <property type="match status" value="1"/>
</dbReference>
<dbReference type="HAMAP" id="MF_00047">
    <property type="entry name" value="Dala_Dala_lig"/>
    <property type="match status" value="1"/>
</dbReference>
<dbReference type="InterPro" id="IPR011761">
    <property type="entry name" value="ATP-grasp"/>
</dbReference>
<dbReference type="InterPro" id="IPR013815">
    <property type="entry name" value="ATP_grasp_subdomain_1"/>
</dbReference>
<dbReference type="InterPro" id="IPR000291">
    <property type="entry name" value="D-Ala_lig_Van_CS"/>
</dbReference>
<dbReference type="InterPro" id="IPR005905">
    <property type="entry name" value="D_ala_D_ala"/>
</dbReference>
<dbReference type="InterPro" id="IPR011095">
    <property type="entry name" value="Dala_Dala_lig_C"/>
</dbReference>
<dbReference type="InterPro" id="IPR011127">
    <property type="entry name" value="Dala_Dala_lig_N"/>
</dbReference>
<dbReference type="InterPro" id="IPR016185">
    <property type="entry name" value="PreATP-grasp_dom_sf"/>
</dbReference>
<dbReference type="NCBIfam" id="TIGR01205">
    <property type="entry name" value="D_ala_D_alaTIGR"/>
    <property type="match status" value="1"/>
</dbReference>
<dbReference type="NCBIfam" id="NF002528">
    <property type="entry name" value="PRK01966.1-4"/>
    <property type="match status" value="1"/>
</dbReference>
<dbReference type="NCBIfam" id="NF002529">
    <property type="entry name" value="PRK01966.1-5"/>
    <property type="match status" value="1"/>
</dbReference>
<dbReference type="PANTHER" id="PTHR23132">
    <property type="entry name" value="D-ALANINE--D-ALANINE LIGASE"/>
    <property type="match status" value="1"/>
</dbReference>
<dbReference type="PANTHER" id="PTHR23132:SF25">
    <property type="entry name" value="D-ALANINE--D-ALANINE LIGASE A"/>
    <property type="match status" value="1"/>
</dbReference>
<dbReference type="Pfam" id="PF07478">
    <property type="entry name" value="Dala_Dala_lig_C"/>
    <property type="match status" value="1"/>
</dbReference>
<dbReference type="Pfam" id="PF01820">
    <property type="entry name" value="Dala_Dala_lig_N"/>
    <property type="match status" value="1"/>
</dbReference>
<dbReference type="PIRSF" id="PIRSF039102">
    <property type="entry name" value="Ddl/VanB"/>
    <property type="match status" value="1"/>
</dbReference>
<dbReference type="SUPFAM" id="SSF56059">
    <property type="entry name" value="Glutathione synthetase ATP-binding domain-like"/>
    <property type="match status" value="1"/>
</dbReference>
<dbReference type="SUPFAM" id="SSF52440">
    <property type="entry name" value="PreATP-grasp domain"/>
    <property type="match status" value="1"/>
</dbReference>
<dbReference type="PROSITE" id="PS50975">
    <property type="entry name" value="ATP_GRASP"/>
    <property type="match status" value="1"/>
</dbReference>
<dbReference type="PROSITE" id="PS00843">
    <property type="entry name" value="DALA_DALA_LIGASE_1"/>
    <property type="match status" value="1"/>
</dbReference>
<dbReference type="PROSITE" id="PS00844">
    <property type="entry name" value="DALA_DALA_LIGASE_2"/>
    <property type="match status" value="1"/>
</dbReference>
<accession>C1CST6</accession>
<gene>
    <name evidence="2" type="primary">ddl</name>
    <name type="ordered locus">SPT_1610</name>
</gene>
<protein>
    <recommendedName>
        <fullName evidence="2">D-alanine--D-alanine ligase</fullName>
        <ecNumber evidence="2">6.3.2.4</ecNumber>
    </recommendedName>
    <alternativeName>
        <fullName evidence="2">D-Ala-D-Ala ligase</fullName>
    </alternativeName>
    <alternativeName>
        <fullName evidence="2">D-alanylalanine synthetase</fullName>
    </alternativeName>
</protein>
<evidence type="ECO:0000250" key="1"/>
<evidence type="ECO:0000255" key="2">
    <source>
        <dbReference type="HAMAP-Rule" id="MF_00047"/>
    </source>
</evidence>
<keyword id="KW-0067">ATP-binding</keyword>
<keyword id="KW-0133">Cell shape</keyword>
<keyword id="KW-0961">Cell wall biogenesis/degradation</keyword>
<keyword id="KW-0963">Cytoplasm</keyword>
<keyword id="KW-0436">Ligase</keyword>
<keyword id="KW-0460">Magnesium</keyword>
<keyword id="KW-0464">Manganese</keyword>
<keyword id="KW-0479">Metal-binding</keyword>
<keyword id="KW-0547">Nucleotide-binding</keyword>
<keyword id="KW-0573">Peptidoglycan synthesis</keyword>
<feature type="chain" id="PRO_1000189750" description="D-alanine--D-alanine ligase">
    <location>
        <begin position="1"/>
        <end position="347"/>
    </location>
</feature>
<feature type="domain" description="ATP-grasp" evidence="2">
    <location>
        <begin position="131"/>
        <end position="333"/>
    </location>
</feature>
<feature type="binding site" evidence="2">
    <location>
        <begin position="161"/>
        <end position="216"/>
    </location>
    <ligand>
        <name>ATP</name>
        <dbReference type="ChEBI" id="CHEBI:30616"/>
    </ligand>
</feature>
<feature type="binding site" evidence="2">
    <location>
        <position position="287"/>
    </location>
    <ligand>
        <name>Mg(2+)</name>
        <dbReference type="ChEBI" id="CHEBI:18420"/>
        <label>1</label>
    </ligand>
</feature>
<feature type="binding site" evidence="2">
    <location>
        <position position="300"/>
    </location>
    <ligand>
        <name>Mg(2+)</name>
        <dbReference type="ChEBI" id="CHEBI:18420"/>
        <label>1</label>
    </ligand>
</feature>
<feature type="binding site" evidence="2">
    <location>
        <position position="300"/>
    </location>
    <ligand>
        <name>Mg(2+)</name>
        <dbReference type="ChEBI" id="CHEBI:18420"/>
        <label>2</label>
    </ligand>
</feature>
<feature type="binding site" evidence="2">
    <location>
        <position position="302"/>
    </location>
    <ligand>
        <name>Mg(2+)</name>
        <dbReference type="ChEBI" id="CHEBI:18420"/>
        <label>2</label>
    </ligand>
</feature>
<proteinExistence type="inferred from homology"/>
<reference key="1">
    <citation type="journal article" date="2010" name="Genome Biol.">
        <title>Structure and dynamics of the pan-genome of Streptococcus pneumoniae and closely related species.</title>
        <authorList>
            <person name="Donati C."/>
            <person name="Hiller N.L."/>
            <person name="Tettelin H."/>
            <person name="Muzzi A."/>
            <person name="Croucher N.J."/>
            <person name="Angiuoli S.V."/>
            <person name="Oggioni M."/>
            <person name="Dunning Hotopp J.C."/>
            <person name="Hu F.Z."/>
            <person name="Riley D.R."/>
            <person name="Covacci A."/>
            <person name="Mitchell T.J."/>
            <person name="Bentley S.D."/>
            <person name="Kilian M."/>
            <person name="Ehrlich G.D."/>
            <person name="Rappuoli R."/>
            <person name="Moxon E.R."/>
            <person name="Masignani V."/>
        </authorList>
    </citation>
    <scope>NUCLEOTIDE SEQUENCE [LARGE SCALE GENOMIC DNA]</scope>
    <source>
        <strain>Taiwan19F-14</strain>
    </source>
</reference>
<comment type="function">
    <text evidence="2">Cell wall formation.</text>
</comment>
<comment type="catalytic activity">
    <reaction evidence="2">
        <text>2 D-alanine + ATP = D-alanyl-D-alanine + ADP + phosphate + H(+)</text>
        <dbReference type="Rhea" id="RHEA:11224"/>
        <dbReference type="ChEBI" id="CHEBI:15378"/>
        <dbReference type="ChEBI" id="CHEBI:30616"/>
        <dbReference type="ChEBI" id="CHEBI:43474"/>
        <dbReference type="ChEBI" id="CHEBI:57416"/>
        <dbReference type="ChEBI" id="CHEBI:57822"/>
        <dbReference type="ChEBI" id="CHEBI:456216"/>
        <dbReference type="EC" id="6.3.2.4"/>
    </reaction>
</comment>
<comment type="cofactor">
    <cofactor evidence="1">
        <name>Mg(2+)</name>
        <dbReference type="ChEBI" id="CHEBI:18420"/>
    </cofactor>
    <cofactor evidence="1">
        <name>Mn(2+)</name>
        <dbReference type="ChEBI" id="CHEBI:29035"/>
    </cofactor>
    <text evidence="1">Binds 2 magnesium or manganese ions per subunit.</text>
</comment>
<comment type="pathway">
    <text evidence="2">Cell wall biogenesis; peptidoglycan biosynthesis.</text>
</comment>
<comment type="subcellular location">
    <subcellularLocation>
        <location evidence="2">Cytoplasm</location>
    </subcellularLocation>
</comment>
<comment type="similarity">
    <text evidence="2">Belongs to the D-alanine--D-alanine ligase family.</text>
</comment>